<evidence type="ECO:0000250" key="1">
    <source>
        <dbReference type="UniProtKB" id="P32322"/>
    </source>
</evidence>
<evidence type="ECO:0000269" key="2">
    <source>
    </source>
</evidence>
<evidence type="ECO:0000305" key="3"/>
<evidence type="ECO:0000312" key="4">
    <source>
        <dbReference type="MGI" id="MGI:2384795"/>
    </source>
</evidence>
<comment type="function">
    <text evidence="1">Oxidoreductase that catalyzes the last step in proline biosynthesis, which corresponds to the reduction of pyrroline-5-carboxylate to L-proline using NAD(P)H. At physiologic concentrations, has higher specific activity in the presence of NADH. Involved in the cellular response to oxidative stress.</text>
</comment>
<comment type="catalytic activity">
    <reaction evidence="1">
        <text>L-proline + NADP(+) = (S)-1-pyrroline-5-carboxylate + NADPH + 2 H(+)</text>
        <dbReference type="Rhea" id="RHEA:14109"/>
        <dbReference type="ChEBI" id="CHEBI:15378"/>
        <dbReference type="ChEBI" id="CHEBI:17388"/>
        <dbReference type="ChEBI" id="CHEBI:57783"/>
        <dbReference type="ChEBI" id="CHEBI:58349"/>
        <dbReference type="ChEBI" id="CHEBI:60039"/>
        <dbReference type="EC" id="1.5.1.2"/>
    </reaction>
    <physiologicalReaction direction="right-to-left" evidence="1">
        <dbReference type="Rhea" id="RHEA:14111"/>
    </physiologicalReaction>
</comment>
<comment type="catalytic activity">
    <reaction evidence="1">
        <text>L-proline + NAD(+) = (S)-1-pyrroline-5-carboxylate + NADH + 2 H(+)</text>
        <dbReference type="Rhea" id="RHEA:14105"/>
        <dbReference type="ChEBI" id="CHEBI:15378"/>
        <dbReference type="ChEBI" id="CHEBI:17388"/>
        <dbReference type="ChEBI" id="CHEBI:57540"/>
        <dbReference type="ChEBI" id="CHEBI:57945"/>
        <dbReference type="ChEBI" id="CHEBI:60039"/>
        <dbReference type="EC" id="1.5.1.2"/>
    </reaction>
    <physiologicalReaction direction="right-to-left" evidence="1">
        <dbReference type="Rhea" id="RHEA:14107"/>
    </physiologicalReaction>
</comment>
<comment type="pathway">
    <text>Amino-acid biosynthesis; L-proline biosynthesis; L-proline from L-glutamate 5-semialdehyde: step 1/1.</text>
</comment>
<comment type="subunit">
    <text evidence="1">Homodecamer; composed of 5 homodimers. Interacts with LTO1.</text>
</comment>
<comment type="subcellular location">
    <subcellularLocation>
        <location evidence="1">Mitochondrion</location>
    </subcellularLocation>
</comment>
<comment type="tissue specificity">
    <text evidence="2">Highly expressed in osteoblasts and skin.</text>
</comment>
<comment type="similarity">
    <text evidence="3">Belongs to the pyrroline-5-carboxylate reductase family.</text>
</comment>
<dbReference type="EC" id="1.5.1.2" evidence="1"/>
<dbReference type="EMBL" id="BC006727">
    <property type="protein sequence ID" value="AAH06727.1"/>
    <property type="molecule type" value="mRNA"/>
</dbReference>
<dbReference type="CCDS" id="CCDS25749.1"/>
<dbReference type="RefSeq" id="NP_001335151.1">
    <property type="nucleotide sequence ID" value="NM_001348222.2"/>
</dbReference>
<dbReference type="RefSeq" id="NP_001366014.1">
    <property type="nucleotide sequence ID" value="NM_001379085.1"/>
</dbReference>
<dbReference type="RefSeq" id="NP_659044.1">
    <property type="nucleotide sequence ID" value="NM_144795.3"/>
</dbReference>
<dbReference type="RefSeq" id="XP_006532798.1">
    <property type="nucleotide sequence ID" value="XM_006532735.2"/>
</dbReference>
<dbReference type="RefSeq" id="XP_011247157.1">
    <property type="nucleotide sequence ID" value="XM_011248855.2"/>
</dbReference>
<dbReference type="SMR" id="Q922W5"/>
<dbReference type="BioGRID" id="229040">
    <property type="interactions" value="5"/>
</dbReference>
<dbReference type="ComplexPortal" id="CPX-2086">
    <property type="entry name" value="Pyrroline-5-carboxylate reductase 1 complex"/>
</dbReference>
<dbReference type="FunCoup" id="Q922W5">
    <property type="interactions" value="903"/>
</dbReference>
<dbReference type="STRING" id="10090.ENSMUSP00000131199"/>
<dbReference type="iPTMnet" id="Q922W5"/>
<dbReference type="PhosphoSitePlus" id="Q922W5"/>
<dbReference type="jPOST" id="Q922W5"/>
<dbReference type="PaxDb" id="10090-ENSMUSP00000026133"/>
<dbReference type="ProteomicsDB" id="294368"/>
<dbReference type="Pumba" id="Q922W5"/>
<dbReference type="Antibodypedia" id="32938">
    <property type="antibodies" value="251 antibodies from 30 providers"/>
</dbReference>
<dbReference type="DNASU" id="209027"/>
<dbReference type="Ensembl" id="ENSMUST00000026133.15">
    <property type="protein sequence ID" value="ENSMUSP00000026133.9"/>
    <property type="gene ID" value="ENSMUSG00000025140.16"/>
</dbReference>
<dbReference type="Ensembl" id="ENSMUST00000170556.8">
    <property type="protein sequence ID" value="ENSMUSP00000131199.2"/>
    <property type="gene ID" value="ENSMUSG00000025140.16"/>
</dbReference>
<dbReference type="GeneID" id="209027"/>
<dbReference type="KEGG" id="mmu:209027"/>
<dbReference type="UCSC" id="uc007mtv.1">
    <property type="organism name" value="mouse"/>
</dbReference>
<dbReference type="AGR" id="MGI:2384795"/>
<dbReference type="CTD" id="5831"/>
<dbReference type="MGI" id="MGI:2384795">
    <property type="gene designation" value="Pycr1"/>
</dbReference>
<dbReference type="VEuPathDB" id="HostDB:ENSMUSG00000025140"/>
<dbReference type="eggNOG" id="KOG3124">
    <property type="taxonomic scope" value="Eukaryota"/>
</dbReference>
<dbReference type="GeneTree" id="ENSGT00950000183044"/>
<dbReference type="InParanoid" id="Q922W5"/>
<dbReference type="OMA" id="VWAVKPQ"/>
<dbReference type="OrthoDB" id="10263291at2759"/>
<dbReference type="PhylomeDB" id="Q922W5"/>
<dbReference type="Reactome" id="R-MMU-8964539">
    <property type="pathway name" value="Glutamate and glutamine metabolism"/>
</dbReference>
<dbReference type="UniPathway" id="UPA00098">
    <property type="reaction ID" value="UER00361"/>
</dbReference>
<dbReference type="BioGRID-ORCS" id="209027">
    <property type="hits" value="2 hits in 80 CRISPR screens"/>
</dbReference>
<dbReference type="PRO" id="PR:Q922W5"/>
<dbReference type="Proteomes" id="UP000000589">
    <property type="component" value="Chromosome 11"/>
</dbReference>
<dbReference type="RNAct" id="Q922W5">
    <property type="molecule type" value="protein"/>
</dbReference>
<dbReference type="Bgee" id="ENSMUSG00000025140">
    <property type="expression patterns" value="Expressed in parotid gland and 196 other cell types or tissues"/>
</dbReference>
<dbReference type="ExpressionAtlas" id="Q922W5">
    <property type="expression patterns" value="baseline and differential"/>
</dbReference>
<dbReference type="GO" id="GO:0005739">
    <property type="term" value="C:mitochondrion"/>
    <property type="evidence" value="ECO:0007005"/>
    <property type="project" value="MGI"/>
</dbReference>
<dbReference type="GO" id="GO:0042802">
    <property type="term" value="F:identical protein binding"/>
    <property type="evidence" value="ECO:0007669"/>
    <property type="project" value="Ensembl"/>
</dbReference>
<dbReference type="GO" id="GO:0004735">
    <property type="term" value="F:pyrroline-5-carboxylate reductase activity"/>
    <property type="evidence" value="ECO:0000250"/>
    <property type="project" value="UniProtKB"/>
</dbReference>
<dbReference type="GO" id="GO:0034599">
    <property type="term" value="P:cellular response to oxidative stress"/>
    <property type="evidence" value="ECO:0000250"/>
    <property type="project" value="UniProtKB"/>
</dbReference>
<dbReference type="GO" id="GO:0055129">
    <property type="term" value="P:L-proline biosynthetic process"/>
    <property type="evidence" value="ECO:0000250"/>
    <property type="project" value="UniProtKB"/>
</dbReference>
<dbReference type="GO" id="GO:1903377">
    <property type="term" value="P:negative regulation of oxidative stress-induced neuron intrinsic apoptotic signaling pathway"/>
    <property type="evidence" value="ECO:0007669"/>
    <property type="project" value="Ensembl"/>
</dbReference>
<dbReference type="GO" id="GO:0006561">
    <property type="term" value="P:proline biosynthetic process"/>
    <property type="evidence" value="ECO:0000250"/>
    <property type="project" value="UniProtKB"/>
</dbReference>
<dbReference type="GO" id="GO:0051881">
    <property type="term" value="P:regulation of mitochondrial membrane potential"/>
    <property type="evidence" value="ECO:0007669"/>
    <property type="project" value="Ensembl"/>
</dbReference>
<dbReference type="FunFam" id="3.40.50.720:FF:000064">
    <property type="entry name" value="Pyrroline-5-carboxylate reductase 1"/>
    <property type="match status" value="1"/>
</dbReference>
<dbReference type="FunFam" id="1.10.3730.10:FF:000003">
    <property type="entry name" value="Pyrroline-5-carboxylate reductase 1, mitochondrial"/>
    <property type="match status" value="1"/>
</dbReference>
<dbReference type="Gene3D" id="3.40.50.720">
    <property type="entry name" value="NAD(P)-binding Rossmann-like Domain"/>
    <property type="match status" value="1"/>
</dbReference>
<dbReference type="Gene3D" id="1.10.3730.10">
    <property type="entry name" value="ProC C-terminal domain-like"/>
    <property type="match status" value="1"/>
</dbReference>
<dbReference type="HAMAP" id="MF_01925">
    <property type="entry name" value="P5C_reductase"/>
    <property type="match status" value="1"/>
</dbReference>
<dbReference type="InterPro" id="IPR008927">
    <property type="entry name" value="6-PGluconate_DH-like_C_sf"/>
</dbReference>
<dbReference type="InterPro" id="IPR036291">
    <property type="entry name" value="NAD(P)-bd_dom_sf"/>
</dbReference>
<dbReference type="InterPro" id="IPR028939">
    <property type="entry name" value="P5C_Rdtase_cat_N"/>
</dbReference>
<dbReference type="InterPro" id="IPR053790">
    <property type="entry name" value="P5CR-like_CS"/>
</dbReference>
<dbReference type="InterPro" id="IPR029036">
    <property type="entry name" value="P5CR_dimer"/>
</dbReference>
<dbReference type="InterPro" id="IPR000304">
    <property type="entry name" value="Pyrroline-COOH_reductase"/>
</dbReference>
<dbReference type="NCBIfam" id="TIGR00112">
    <property type="entry name" value="proC"/>
    <property type="match status" value="1"/>
</dbReference>
<dbReference type="PANTHER" id="PTHR11645">
    <property type="entry name" value="PYRROLINE-5-CARBOXYLATE REDUCTASE"/>
    <property type="match status" value="1"/>
</dbReference>
<dbReference type="PANTHER" id="PTHR11645:SF6">
    <property type="entry name" value="PYRROLINE-5-CARBOXYLATE REDUCTASE 1, MITOCHONDRIAL"/>
    <property type="match status" value="1"/>
</dbReference>
<dbReference type="Pfam" id="PF03807">
    <property type="entry name" value="F420_oxidored"/>
    <property type="match status" value="1"/>
</dbReference>
<dbReference type="Pfam" id="PF14748">
    <property type="entry name" value="P5CR_dimer"/>
    <property type="match status" value="1"/>
</dbReference>
<dbReference type="PIRSF" id="PIRSF000193">
    <property type="entry name" value="Pyrrol-5-carb_rd"/>
    <property type="match status" value="1"/>
</dbReference>
<dbReference type="SUPFAM" id="SSF48179">
    <property type="entry name" value="6-phosphogluconate dehydrogenase C-terminal domain-like"/>
    <property type="match status" value="1"/>
</dbReference>
<dbReference type="SUPFAM" id="SSF51735">
    <property type="entry name" value="NAD(P)-binding Rossmann-fold domains"/>
    <property type="match status" value="1"/>
</dbReference>
<dbReference type="PROSITE" id="PS00521">
    <property type="entry name" value="P5CR"/>
    <property type="match status" value="1"/>
</dbReference>
<name>P5CR1_MOUSE</name>
<sequence>MSVGFIGAGQLAFALAKGFTAAGVLAAHKIMASSPDMDQATVSALRKIGVNLTPHNKETVRHSDVLFLAVKPHIIPFILDEIGANIEDRHIVVSCAAGVTINSIEKKLTAFQPAPKVIRCMTNTPVVVREGVTVYATGTHAQVEDGRLVEQLMGSVGFCTEVEEDLIDAVTGLSGSGPAYAFTALDALADGGVKMGLPRRLAVRLGAQALLGAAKMLLDSEQHPSQLKDNVCSPGGATIHALHVLESGGFRSLLINAVEASCIRTRELQTMADQETISPAAIKKTVLDKVKLDSSAGASLSSDHVKPLP</sequence>
<protein>
    <recommendedName>
        <fullName>Pyrroline-5-carboxylate reductase 1, mitochondrial</fullName>
        <shortName>P5C reductase 1</shortName>
        <shortName>P5CR 1</shortName>
        <ecNumber evidence="1">1.5.1.2</ecNumber>
    </recommendedName>
</protein>
<organism>
    <name type="scientific">Mus musculus</name>
    <name type="common">Mouse</name>
    <dbReference type="NCBI Taxonomy" id="10090"/>
    <lineage>
        <taxon>Eukaryota</taxon>
        <taxon>Metazoa</taxon>
        <taxon>Chordata</taxon>
        <taxon>Craniata</taxon>
        <taxon>Vertebrata</taxon>
        <taxon>Euteleostomi</taxon>
        <taxon>Mammalia</taxon>
        <taxon>Eutheria</taxon>
        <taxon>Euarchontoglires</taxon>
        <taxon>Glires</taxon>
        <taxon>Rodentia</taxon>
        <taxon>Myomorpha</taxon>
        <taxon>Muroidea</taxon>
        <taxon>Muridae</taxon>
        <taxon>Murinae</taxon>
        <taxon>Mus</taxon>
        <taxon>Mus</taxon>
    </lineage>
</organism>
<proteinExistence type="evidence at protein level"/>
<keyword id="KW-0007">Acetylation</keyword>
<keyword id="KW-0028">Amino-acid biosynthesis</keyword>
<keyword id="KW-0496">Mitochondrion</keyword>
<keyword id="KW-0521">NADP</keyword>
<keyword id="KW-0560">Oxidoreductase</keyword>
<keyword id="KW-0597">Phosphoprotein</keyword>
<keyword id="KW-0641">Proline biosynthesis</keyword>
<keyword id="KW-1185">Reference proteome</keyword>
<keyword id="KW-0346">Stress response</keyword>
<reference key="1">
    <citation type="journal article" date="2004" name="Genome Res.">
        <title>The status, quality, and expansion of the NIH full-length cDNA project: the Mammalian Gene Collection (MGC).</title>
        <authorList>
            <consortium name="The MGC Project Team"/>
        </authorList>
    </citation>
    <scope>NUCLEOTIDE SEQUENCE [LARGE SCALE MRNA]</scope>
    <source>
        <strain>FVB/N</strain>
        <tissue>Mammary tumor</tissue>
    </source>
</reference>
<reference key="2">
    <citation type="journal article" date="2009" name="Nat. Genet.">
        <title>Mutations in PYCR1 cause cutis laxa with progeroid features.</title>
        <authorList>
            <person name="Reversade B."/>
            <person name="Escande-Beillard N."/>
            <person name="Dimopoulou A."/>
            <person name="Fischer B."/>
            <person name="Chng S.C."/>
            <person name="Li Y."/>
            <person name="Shboul M."/>
            <person name="Tham P.-Y."/>
            <person name="Kayserili H."/>
            <person name="Al-Gazali L."/>
            <person name="Shahwan M."/>
            <person name="Brancati F."/>
            <person name="Lee H."/>
            <person name="O'Connor B.D."/>
            <person name="Schmidt-von Kegler M."/>
            <person name="Merriman B."/>
            <person name="Nelson S.F."/>
            <person name="Masri A."/>
            <person name="Alkazaleh F."/>
            <person name="Guerra D."/>
            <person name="Ferrari P."/>
            <person name="Nanda A."/>
            <person name="Rajab A."/>
            <person name="Markie D."/>
            <person name="Gray M."/>
            <person name="Nelson J."/>
            <person name="Grix A."/>
            <person name="Sommer A."/>
            <person name="Savarirayan R."/>
            <person name="Janecke A.R."/>
            <person name="Steichen E."/>
            <person name="Sillence D."/>
            <person name="Hausser I."/>
            <person name="Budde B."/>
            <person name="Nuernberg G."/>
            <person name="Nuernberg P."/>
            <person name="Seemann P."/>
            <person name="Kunkel D."/>
            <person name="Zambruno G."/>
            <person name="Dallapiccola B."/>
            <person name="Schuelke M."/>
            <person name="Robertson S."/>
            <person name="Hamamy H."/>
            <person name="Wollnik B."/>
            <person name="Van Maldergem L."/>
            <person name="Mundlos S."/>
            <person name="Kornak U."/>
        </authorList>
    </citation>
    <scope>TISSUE SPECIFICITY</scope>
</reference>
<reference key="3">
    <citation type="journal article" date="2010" name="Cell">
        <title>A tissue-specific atlas of mouse protein phosphorylation and expression.</title>
        <authorList>
            <person name="Huttlin E.L."/>
            <person name="Jedrychowski M.P."/>
            <person name="Elias J.E."/>
            <person name="Goswami T."/>
            <person name="Rad R."/>
            <person name="Beausoleil S.A."/>
            <person name="Villen J."/>
            <person name="Haas W."/>
            <person name="Sowa M.E."/>
            <person name="Gygi S.P."/>
        </authorList>
    </citation>
    <scope>IDENTIFICATION BY MASS SPECTROMETRY [LARGE SCALE ANALYSIS]</scope>
    <source>
        <tissue>Pancreas</tissue>
    </source>
</reference>
<accession>Q922W5</accession>
<feature type="initiator methionine" description="Removed" evidence="1">
    <location>
        <position position="1"/>
    </location>
</feature>
<feature type="chain" id="PRO_0000187315" description="Pyrroline-5-carboxylate reductase 1, mitochondrial">
    <location>
        <begin position="2"/>
        <end position="309"/>
    </location>
</feature>
<feature type="binding site" evidence="1">
    <location>
        <begin position="6"/>
        <end position="11"/>
    </location>
    <ligand>
        <name>NADP(+)</name>
        <dbReference type="ChEBI" id="CHEBI:58349"/>
    </ligand>
</feature>
<feature type="binding site" evidence="1">
    <location>
        <position position="8"/>
    </location>
    <ligand>
        <name>NADPH</name>
        <dbReference type="ChEBI" id="CHEBI:57783"/>
    </ligand>
</feature>
<feature type="binding site" evidence="1">
    <location>
        <position position="10"/>
    </location>
    <ligand>
        <name>NADPH</name>
        <dbReference type="ChEBI" id="CHEBI:57783"/>
    </ligand>
</feature>
<feature type="binding site" evidence="1">
    <location>
        <position position="11"/>
    </location>
    <ligand>
        <name>NADPH</name>
        <dbReference type="ChEBI" id="CHEBI:57783"/>
    </ligand>
</feature>
<feature type="binding site" evidence="1">
    <location>
        <position position="34"/>
    </location>
    <ligand>
        <name>NADP(+)</name>
        <dbReference type="ChEBI" id="CHEBI:58349"/>
    </ligand>
</feature>
<feature type="binding site" evidence="1">
    <location>
        <position position="34"/>
    </location>
    <ligand>
        <name>NADPH</name>
        <dbReference type="ChEBI" id="CHEBI:57783"/>
    </ligand>
</feature>
<feature type="binding site" evidence="1">
    <location>
        <position position="36"/>
    </location>
    <ligand>
        <name>NADPH</name>
        <dbReference type="ChEBI" id="CHEBI:57783"/>
    </ligand>
</feature>
<feature type="binding site" evidence="1">
    <location>
        <position position="56"/>
    </location>
    <ligand>
        <name>NADP(+)</name>
        <dbReference type="ChEBI" id="CHEBI:58349"/>
    </ligand>
</feature>
<feature type="binding site" evidence="1">
    <location>
        <position position="56"/>
    </location>
    <ligand>
        <name>NADPH</name>
        <dbReference type="ChEBI" id="CHEBI:57783"/>
    </ligand>
</feature>
<feature type="binding site" evidence="1">
    <location>
        <begin position="69"/>
        <end position="72"/>
    </location>
    <ligand>
        <name>NADP(+)</name>
        <dbReference type="ChEBI" id="CHEBI:58349"/>
    </ligand>
</feature>
<feature type="binding site" evidence="1">
    <location>
        <position position="70"/>
    </location>
    <ligand>
        <name>NADPH</name>
        <dbReference type="ChEBI" id="CHEBI:57783"/>
    </ligand>
</feature>
<feature type="binding site" evidence="1">
    <location>
        <position position="71"/>
    </location>
    <ligand>
        <name>NADPH</name>
        <dbReference type="ChEBI" id="CHEBI:57783"/>
    </ligand>
</feature>
<feature type="binding site" evidence="1">
    <location>
        <begin position="95"/>
        <end position="97"/>
    </location>
    <ligand>
        <name>NADP(+)</name>
        <dbReference type="ChEBI" id="CHEBI:58349"/>
    </ligand>
</feature>
<feature type="binding site" evidence="1">
    <location>
        <position position="97"/>
    </location>
    <ligand>
        <name>NADPH</name>
        <dbReference type="ChEBI" id="CHEBI:57783"/>
    </ligand>
</feature>
<feature type="binding site" evidence="1">
    <location>
        <position position="164"/>
    </location>
    <ligand>
        <name>L-proline</name>
        <dbReference type="ChEBI" id="CHEBI:60039"/>
    </ligand>
</feature>
<feature type="binding site" evidence="1">
    <location>
        <position position="230"/>
    </location>
    <ligand>
        <name>NADPH</name>
        <dbReference type="ChEBI" id="CHEBI:57783"/>
    </ligand>
</feature>
<feature type="binding site" evidence="1">
    <location>
        <position position="237"/>
    </location>
    <ligand>
        <name>L-proline</name>
        <dbReference type="ChEBI" id="CHEBI:60039"/>
    </ligand>
</feature>
<feature type="binding site" evidence="1">
    <location>
        <position position="238"/>
    </location>
    <ligand>
        <name>L-proline</name>
        <dbReference type="ChEBI" id="CHEBI:60039"/>
    </ligand>
</feature>
<feature type="modified residue" description="N-acetylserine" evidence="1">
    <location>
        <position position="2"/>
    </location>
</feature>
<feature type="modified residue" description="Phosphoserine" evidence="1">
    <location>
        <position position="278"/>
    </location>
</feature>
<feature type="modified residue" description="Phosphoserine" evidence="1">
    <location>
        <position position="301"/>
    </location>
</feature>
<gene>
    <name evidence="4" type="primary">Pycr1</name>
</gene>